<keyword id="KW-0963">Cytoplasm</keyword>
<keyword id="KW-0210">Decarboxylase</keyword>
<keyword id="KW-0456">Lyase</keyword>
<keyword id="KW-0627">Porphyrin biosynthesis</keyword>
<protein>
    <recommendedName>
        <fullName evidence="1">Uroporphyrinogen decarboxylase</fullName>
        <shortName evidence="1">UPD</shortName>
        <shortName evidence="1">URO-D</shortName>
        <ecNumber evidence="1">4.1.1.37</ecNumber>
    </recommendedName>
</protein>
<feature type="chain" id="PRO_1000204234" description="Uroporphyrinogen decarboxylase">
    <location>
        <begin position="1"/>
        <end position="356"/>
    </location>
</feature>
<feature type="binding site" evidence="1">
    <location>
        <begin position="27"/>
        <end position="31"/>
    </location>
    <ligand>
        <name>substrate</name>
    </ligand>
</feature>
<feature type="binding site" evidence="1">
    <location>
        <position position="77"/>
    </location>
    <ligand>
        <name>substrate</name>
    </ligand>
</feature>
<feature type="binding site" evidence="1">
    <location>
        <position position="154"/>
    </location>
    <ligand>
        <name>substrate</name>
    </ligand>
</feature>
<feature type="binding site" evidence="1">
    <location>
        <position position="209"/>
    </location>
    <ligand>
        <name>substrate</name>
    </ligand>
</feature>
<feature type="binding site" evidence="1">
    <location>
        <position position="327"/>
    </location>
    <ligand>
        <name>substrate</name>
    </ligand>
</feature>
<feature type="site" description="Transition state stabilizer" evidence="1">
    <location>
        <position position="77"/>
    </location>
</feature>
<dbReference type="EC" id="4.1.1.37" evidence="1"/>
<dbReference type="EMBL" id="CP001277">
    <property type="protein sequence ID" value="ACQ68815.1"/>
    <property type="molecule type" value="Genomic_DNA"/>
</dbReference>
<dbReference type="RefSeq" id="WP_015874538.1">
    <property type="nucleotide sequence ID" value="NC_012751.1"/>
</dbReference>
<dbReference type="SMR" id="C4K8F9"/>
<dbReference type="STRING" id="572265.HDEF_2274"/>
<dbReference type="GeneID" id="66261777"/>
<dbReference type="KEGG" id="hde:HDEF_2274"/>
<dbReference type="eggNOG" id="COG0407">
    <property type="taxonomic scope" value="Bacteria"/>
</dbReference>
<dbReference type="HOGENOM" id="CLU_040933_0_0_6"/>
<dbReference type="UniPathway" id="UPA00251">
    <property type="reaction ID" value="UER00321"/>
</dbReference>
<dbReference type="Proteomes" id="UP000002334">
    <property type="component" value="Chromosome"/>
</dbReference>
<dbReference type="GO" id="GO:0005829">
    <property type="term" value="C:cytosol"/>
    <property type="evidence" value="ECO:0007669"/>
    <property type="project" value="TreeGrafter"/>
</dbReference>
<dbReference type="GO" id="GO:0004853">
    <property type="term" value="F:uroporphyrinogen decarboxylase activity"/>
    <property type="evidence" value="ECO:0007669"/>
    <property type="project" value="UniProtKB-UniRule"/>
</dbReference>
<dbReference type="GO" id="GO:0019353">
    <property type="term" value="P:protoporphyrinogen IX biosynthetic process from glutamate"/>
    <property type="evidence" value="ECO:0007669"/>
    <property type="project" value="TreeGrafter"/>
</dbReference>
<dbReference type="CDD" id="cd00717">
    <property type="entry name" value="URO-D"/>
    <property type="match status" value="1"/>
</dbReference>
<dbReference type="FunFam" id="3.20.20.210:FF:000001">
    <property type="entry name" value="Uroporphyrinogen decarboxylase"/>
    <property type="match status" value="1"/>
</dbReference>
<dbReference type="Gene3D" id="3.20.20.210">
    <property type="match status" value="1"/>
</dbReference>
<dbReference type="HAMAP" id="MF_00218">
    <property type="entry name" value="URO_D"/>
    <property type="match status" value="1"/>
</dbReference>
<dbReference type="InterPro" id="IPR038071">
    <property type="entry name" value="UROD/MetE-like_sf"/>
</dbReference>
<dbReference type="InterPro" id="IPR006361">
    <property type="entry name" value="Uroporphyrinogen_deCO2ase_HemE"/>
</dbReference>
<dbReference type="InterPro" id="IPR000257">
    <property type="entry name" value="Uroporphyrinogen_deCOase"/>
</dbReference>
<dbReference type="NCBIfam" id="TIGR01464">
    <property type="entry name" value="hemE"/>
    <property type="match status" value="1"/>
</dbReference>
<dbReference type="PANTHER" id="PTHR21091">
    <property type="entry name" value="METHYLTETRAHYDROFOLATE:HOMOCYSTEINE METHYLTRANSFERASE RELATED"/>
    <property type="match status" value="1"/>
</dbReference>
<dbReference type="PANTHER" id="PTHR21091:SF169">
    <property type="entry name" value="UROPORPHYRINOGEN DECARBOXYLASE"/>
    <property type="match status" value="1"/>
</dbReference>
<dbReference type="Pfam" id="PF01208">
    <property type="entry name" value="URO-D"/>
    <property type="match status" value="1"/>
</dbReference>
<dbReference type="SUPFAM" id="SSF51726">
    <property type="entry name" value="UROD/MetE-like"/>
    <property type="match status" value="1"/>
</dbReference>
<dbReference type="PROSITE" id="PS00906">
    <property type="entry name" value="UROD_1"/>
    <property type="match status" value="1"/>
</dbReference>
<dbReference type="PROSITE" id="PS00907">
    <property type="entry name" value="UROD_2"/>
    <property type="match status" value="1"/>
</dbReference>
<gene>
    <name evidence="1" type="primary">hemE</name>
    <name type="ordered locus">HDEF_2274</name>
</gene>
<comment type="function">
    <text evidence="1">Catalyzes the decarboxylation of four acetate groups of uroporphyrinogen-III to yield coproporphyrinogen-III.</text>
</comment>
<comment type="catalytic activity">
    <reaction evidence="1">
        <text>uroporphyrinogen III + 4 H(+) = coproporphyrinogen III + 4 CO2</text>
        <dbReference type="Rhea" id="RHEA:19865"/>
        <dbReference type="ChEBI" id="CHEBI:15378"/>
        <dbReference type="ChEBI" id="CHEBI:16526"/>
        <dbReference type="ChEBI" id="CHEBI:57308"/>
        <dbReference type="ChEBI" id="CHEBI:57309"/>
        <dbReference type="EC" id="4.1.1.37"/>
    </reaction>
</comment>
<comment type="pathway">
    <text evidence="1">Porphyrin-containing compound metabolism; protoporphyrin-IX biosynthesis; coproporphyrinogen-III from 5-aminolevulinate: step 4/4.</text>
</comment>
<comment type="subunit">
    <text evidence="1">Homodimer.</text>
</comment>
<comment type="subcellular location">
    <subcellularLocation>
        <location evidence="1">Cytoplasm</location>
    </subcellularLocation>
</comment>
<comment type="similarity">
    <text evidence="1">Belongs to the uroporphyrinogen decarboxylase family.</text>
</comment>
<reference key="1">
    <citation type="journal article" date="2009" name="Proc. Natl. Acad. Sci. U.S.A.">
        <title>Hamiltonella defensa, genome evolution of protective bacterial endosymbiont from pathogenic ancestors.</title>
        <authorList>
            <person name="Degnan P.H."/>
            <person name="Yu Y."/>
            <person name="Sisneros N."/>
            <person name="Wing R.A."/>
            <person name="Moran N.A."/>
        </authorList>
    </citation>
    <scope>NUCLEOTIDE SEQUENCE [LARGE SCALE GENOMIC DNA]</scope>
    <source>
        <strain>5AT</strain>
    </source>
</reference>
<proteinExistence type="inferred from homology"/>
<accession>C4K8F9</accession>
<sequence length="356" mass="39418">MKILKNDAYIRALLRESVDITPVWMMRQAGRYLPEYKKIRAQAGDFMSLCKNTQLACEVTLQPLRRYPLDAAILFSDILTIPDAMGLGLYFTTGEGPKFHFPIRMKADIEKLPIPDPEKELRYVMDLARTVRKELAGTVPLIGFAGSPWTIATYMVEGGSSKIFSRLKAMLYTEPATLHLLLNKLTQTVILYLNAQIQAGVQSIMIFDTWGGVLSGENYRIFSLNYMHQIIEGLTRENEGCKIPVTLFTKGGGQWLEAIAETGCDAIGLDWTTDIGEARHRVGDKVALQGNMDPAVLYAPAPIIEKEVASILGAFGKGTGHIFNLGHGVHQDTPPEHVRIFVDAVHRLSKNDAASG</sequence>
<organism>
    <name type="scientific">Hamiltonella defensa subsp. Acyrthosiphon pisum (strain 5AT)</name>
    <dbReference type="NCBI Taxonomy" id="572265"/>
    <lineage>
        <taxon>Bacteria</taxon>
        <taxon>Pseudomonadati</taxon>
        <taxon>Pseudomonadota</taxon>
        <taxon>Gammaproteobacteria</taxon>
        <taxon>Enterobacterales</taxon>
        <taxon>Enterobacteriaceae</taxon>
        <taxon>aphid secondary symbionts</taxon>
        <taxon>Candidatus Hamiltonella</taxon>
    </lineage>
</organism>
<evidence type="ECO:0000255" key="1">
    <source>
        <dbReference type="HAMAP-Rule" id="MF_00218"/>
    </source>
</evidence>
<name>DCUP_HAMD5</name>